<dbReference type="EMBL" id="CM002236">
    <property type="protein sequence ID" value="EAA36082.1"/>
    <property type="molecule type" value="Genomic_DNA"/>
</dbReference>
<dbReference type="RefSeq" id="XP_965318.1">
    <property type="nucleotide sequence ID" value="XM_960225.2"/>
</dbReference>
<dbReference type="SMR" id="Q7SGV1"/>
<dbReference type="FunCoup" id="Q7SGV1">
    <property type="interactions" value="481"/>
</dbReference>
<dbReference type="STRING" id="367110.Q7SGV1"/>
<dbReference type="PaxDb" id="5141-EFNCRP00000002834"/>
<dbReference type="EnsemblFungi" id="EAA36082">
    <property type="protein sequence ID" value="EAA36082"/>
    <property type="gene ID" value="NCU03218"/>
</dbReference>
<dbReference type="GeneID" id="3881467"/>
<dbReference type="KEGG" id="ncr:NCU03218"/>
<dbReference type="VEuPathDB" id="FungiDB:NCU03218"/>
<dbReference type="HOGENOM" id="CLU_027221_2_0_1"/>
<dbReference type="InParanoid" id="Q7SGV1"/>
<dbReference type="OMA" id="WSLHRFI"/>
<dbReference type="OrthoDB" id="205639at2759"/>
<dbReference type="Proteomes" id="UP000001805">
    <property type="component" value="Chromosome 1, Linkage Group I"/>
</dbReference>
<dbReference type="GO" id="GO:0005769">
    <property type="term" value="C:early endosome"/>
    <property type="evidence" value="ECO:0000318"/>
    <property type="project" value="GO_Central"/>
</dbReference>
<dbReference type="GO" id="GO:0010008">
    <property type="term" value="C:endosome membrane"/>
    <property type="evidence" value="ECO:0007669"/>
    <property type="project" value="UniProtKB-SubCell"/>
</dbReference>
<dbReference type="GO" id="GO:0000407">
    <property type="term" value="C:phagophore assembly site"/>
    <property type="evidence" value="ECO:0000318"/>
    <property type="project" value="GO_Central"/>
</dbReference>
<dbReference type="GO" id="GO:0035091">
    <property type="term" value="F:phosphatidylinositol binding"/>
    <property type="evidence" value="ECO:0007669"/>
    <property type="project" value="InterPro"/>
</dbReference>
<dbReference type="GO" id="GO:0032456">
    <property type="term" value="P:endocytic recycling"/>
    <property type="evidence" value="ECO:0000318"/>
    <property type="project" value="GO_Central"/>
</dbReference>
<dbReference type="GO" id="GO:0000423">
    <property type="term" value="P:mitophagy"/>
    <property type="evidence" value="ECO:0000318"/>
    <property type="project" value="GO_Central"/>
</dbReference>
<dbReference type="GO" id="GO:0034727">
    <property type="term" value="P:piecemeal microautophagy of the nucleus"/>
    <property type="evidence" value="ECO:0000318"/>
    <property type="project" value="GO_Central"/>
</dbReference>
<dbReference type="GO" id="GO:0015031">
    <property type="term" value="P:protein transport"/>
    <property type="evidence" value="ECO:0000318"/>
    <property type="project" value="GO_Central"/>
</dbReference>
<dbReference type="GO" id="GO:0061709">
    <property type="term" value="P:reticulophagy"/>
    <property type="evidence" value="ECO:0000318"/>
    <property type="project" value="GO_Central"/>
</dbReference>
<dbReference type="CDD" id="cd07628">
    <property type="entry name" value="BAR_Atg24p"/>
    <property type="match status" value="1"/>
</dbReference>
<dbReference type="CDD" id="cd06863">
    <property type="entry name" value="PX_Atg24p"/>
    <property type="match status" value="1"/>
</dbReference>
<dbReference type="FunFam" id="3.30.1520.10:FF:000035">
    <property type="entry name" value="Sorting nexin-4 protein"/>
    <property type="match status" value="1"/>
</dbReference>
<dbReference type="FunFam" id="1.20.1270.60:FF:000042">
    <property type="entry name" value="Vacuolar targeting protein Atg24"/>
    <property type="match status" value="1"/>
</dbReference>
<dbReference type="Gene3D" id="1.20.1270.60">
    <property type="entry name" value="Arfaptin homology (AH) domain/BAR domain"/>
    <property type="match status" value="1"/>
</dbReference>
<dbReference type="Gene3D" id="3.30.1520.10">
    <property type="entry name" value="Phox-like domain"/>
    <property type="match status" value="1"/>
</dbReference>
<dbReference type="InterPro" id="IPR027267">
    <property type="entry name" value="AH/BAR_dom_sf"/>
</dbReference>
<dbReference type="InterPro" id="IPR004148">
    <property type="entry name" value="BAR_dom"/>
</dbReference>
<dbReference type="InterPro" id="IPR001683">
    <property type="entry name" value="PX_dom"/>
</dbReference>
<dbReference type="InterPro" id="IPR036871">
    <property type="entry name" value="PX_dom_sf"/>
</dbReference>
<dbReference type="PANTHER" id="PTHR45949">
    <property type="entry name" value="SORTING NEXIN-4"/>
    <property type="match status" value="1"/>
</dbReference>
<dbReference type="PANTHER" id="PTHR45949:SF2">
    <property type="entry name" value="SORTING NEXIN-4"/>
    <property type="match status" value="1"/>
</dbReference>
<dbReference type="Pfam" id="PF03114">
    <property type="entry name" value="BAR"/>
    <property type="match status" value="1"/>
</dbReference>
<dbReference type="Pfam" id="PF00787">
    <property type="entry name" value="PX"/>
    <property type="match status" value="1"/>
</dbReference>
<dbReference type="SMART" id="SM00312">
    <property type="entry name" value="PX"/>
    <property type="match status" value="1"/>
</dbReference>
<dbReference type="SUPFAM" id="SSF103657">
    <property type="entry name" value="BAR/IMD domain-like"/>
    <property type="match status" value="1"/>
</dbReference>
<dbReference type="SUPFAM" id="SSF64268">
    <property type="entry name" value="PX domain"/>
    <property type="match status" value="1"/>
</dbReference>
<dbReference type="PROSITE" id="PS50195">
    <property type="entry name" value="PX"/>
    <property type="match status" value="1"/>
</dbReference>
<evidence type="ECO:0000250" key="1"/>
<evidence type="ECO:0000250" key="2">
    <source>
        <dbReference type="UniProtKB" id="P47057"/>
    </source>
</evidence>
<evidence type="ECO:0000255" key="3"/>
<evidence type="ECO:0000255" key="4">
    <source>
        <dbReference type="PROSITE-ProRule" id="PRU00147"/>
    </source>
</evidence>
<evidence type="ECO:0000256" key="5">
    <source>
        <dbReference type="SAM" id="MobiDB-lite"/>
    </source>
</evidence>
<evidence type="ECO:0000305" key="6"/>
<name>SNX4_NEUCR</name>
<reference key="1">
    <citation type="journal article" date="2003" name="Nature">
        <title>The genome sequence of the filamentous fungus Neurospora crassa.</title>
        <authorList>
            <person name="Galagan J.E."/>
            <person name="Calvo S.E."/>
            <person name="Borkovich K.A."/>
            <person name="Selker E.U."/>
            <person name="Read N.D."/>
            <person name="Jaffe D.B."/>
            <person name="FitzHugh W."/>
            <person name="Ma L.-J."/>
            <person name="Smirnov S."/>
            <person name="Purcell S."/>
            <person name="Rehman B."/>
            <person name="Elkins T."/>
            <person name="Engels R."/>
            <person name="Wang S."/>
            <person name="Nielsen C.B."/>
            <person name="Butler J."/>
            <person name="Endrizzi M."/>
            <person name="Qui D."/>
            <person name="Ianakiev P."/>
            <person name="Bell-Pedersen D."/>
            <person name="Nelson M.A."/>
            <person name="Werner-Washburne M."/>
            <person name="Selitrennikoff C.P."/>
            <person name="Kinsey J.A."/>
            <person name="Braun E.L."/>
            <person name="Zelter A."/>
            <person name="Schulte U."/>
            <person name="Kothe G.O."/>
            <person name="Jedd G."/>
            <person name="Mewes H.-W."/>
            <person name="Staben C."/>
            <person name="Marcotte E."/>
            <person name="Greenberg D."/>
            <person name="Roy A."/>
            <person name="Foley K."/>
            <person name="Naylor J."/>
            <person name="Stange-Thomann N."/>
            <person name="Barrett R."/>
            <person name="Gnerre S."/>
            <person name="Kamal M."/>
            <person name="Kamvysselis M."/>
            <person name="Mauceli E.W."/>
            <person name="Bielke C."/>
            <person name="Rudd S."/>
            <person name="Frishman D."/>
            <person name="Krystofova S."/>
            <person name="Rasmussen C."/>
            <person name="Metzenberg R.L."/>
            <person name="Perkins D.D."/>
            <person name="Kroken S."/>
            <person name="Cogoni C."/>
            <person name="Macino G."/>
            <person name="Catcheside D.E.A."/>
            <person name="Li W."/>
            <person name="Pratt R.J."/>
            <person name="Osmani S.A."/>
            <person name="DeSouza C.P.C."/>
            <person name="Glass N.L."/>
            <person name="Orbach M.J."/>
            <person name="Berglund J.A."/>
            <person name="Voelker R."/>
            <person name="Yarden O."/>
            <person name="Plamann M."/>
            <person name="Seiler S."/>
            <person name="Dunlap J.C."/>
            <person name="Radford A."/>
            <person name="Aramayo R."/>
            <person name="Natvig D.O."/>
            <person name="Alex L.A."/>
            <person name="Mannhaupt G."/>
            <person name="Ebbole D.J."/>
            <person name="Freitag M."/>
            <person name="Paulsen I."/>
            <person name="Sachs M.S."/>
            <person name="Lander E.S."/>
            <person name="Nusbaum C."/>
            <person name="Birren B.W."/>
        </authorList>
    </citation>
    <scope>NUCLEOTIDE SEQUENCE [LARGE SCALE GENOMIC DNA]</scope>
    <source>
        <strain>ATCC 24698 / 74-OR23-1A / CBS 708.71 / DSM 1257 / FGSC 987</strain>
    </source>
</reference>
<keyword id="KW-0072">Autophagy</keyword>
<keyword id="KW-0175">Coiled coil</keyword>
<keyword id="KW-0963">Cytoplasm</keyword>
<keyword id="KW-0967">Endosome</keyword>
<keyword id="KW-0446">Lipid-binding</keyword>
<keyword id="KW-0472">Membrane</keyword>
<keyword id="KW-0653">Protein transport</keyword>
<keyword id="KW-1185">Reference proteome</keyword>
<keyword id="KW-0813">Transport</keyword>
<proteinExistence type="inferred from homology"/>
<feature type="chain" id="PRO_0000213815" description="Sorting nexin-4">
    <location>
        <begin position="1"/>
        <end position="493"/>
    </location>
</feature>
<feature type="domain" description="PX" evidence="4">
    <location>
        <begin position="68"/>
        <end position="190"/>
    </location>
</feature>
<feature type="region of interest" description="Disordered" evidence="5">
    <location>
        <begin position="1"/>
        <end position="77"/>
    </location>
</feature>
<feature type="coiled-coil region" evidence="3">
    <location>
        <begin position="248"/>
        <end position="292"/>
    </location>
</feature>
<feature type="coiled-coil region" evidence="3">
    <location>
        <begin position="338"/>
        <end position="363"/>
    </location>
</feature>
<feature type="coiled-coil region" evidence="3">
    <location>
        <begin position="405"/>
        <end position="442"/>
    </location>
</feature>
<feature type="compositionally biased region" description="Polar residues" evidence="5">
    <location>
        <begin position="7"/>
        <end position="28"/>
    </location>
</feature>
<feature type="compositionally biased region" description="Basic and acidic residues" evidence="5">
    <location>
        <begin position="56"/>
        <end position="65"/>
    </location>
</feature>
<feature type="binding site" evidence="1">
    <location>
        <position position="111"/>
    </location>
    <ligand>
        <name>a 1,2-diacyl-sn-glycero-3-phospho-(1D-myo-inositol-3-phosphate)</name>
        <dbReference type="ChEBI" id="CHEBI:58088"/>
    </ligand>
</feature>
<feature type="binding site" evidence="1">
    <location>
        <position position="113"/>
    </location>
    <ligand>
        <name>a 1,2-diacyl-sn-glycero-3-phospho-(1D-myo-inositol-3-phosphate)</name>
        <dbReference type="ChEBI" id="CHEBI:58088"/>
    </ligand>
</feature>
<feature type="binding site" evidence="1">
    <location>
        <position position="137"/>
    </location>
    <ligand>
        <name>a 1,2-diacyl-sn-glycero-3-phospho-(1D-myo-inositol-3-phosphate)</name>
        <dbReference type="ChEBI" id="CHEBI:58088"/>
    </ligand>
</feature>
<feature type="binding site" evidence="1">
    <location>
        <position position="156"/>
    </location>
    <ligand>
        <name>a 1,2-diacyl-sn-glycero-3-phospho-(1D-myo-inositol-3-phosphate)</name>
        <dbReference type="ChEBI" id="CHEBI:58088"/>
    </ligand>
</feature>
<gene>
    <name type="primary">vsp-5</name>
    <name type="synonym">atg24</name>
    <name type="synonym">snx4</name>
    <name type="ORF">NCU03218</name>
</gene>
<accession>Q7SGV1</accession>
<protein>
    <recommendedName>
        <fullName>Sorting nexin-4</fullName>
    </recommendedName>
    <alternativeName>
        <fullName>Autophagy-related protein 24</fullName>
    </alternativeName>
    <alternativeName>
        <fullName>Vacuolar sorting protein 5</fullName>
    </alternativeName>
</protein>
<organism>
    <name type="scientific">Neurospora crassa (strain ATCC 24698 / 74-OR23-1A / CBS 708.71 / DSM 1257 / FGSC 987)</name>
    <dbReference type="NCBI Taxonomy" id="367110"/>
    <lineage>
        <taxon>Eukaryota</taxon>
        <taxon>Fungi</taxon>
        <taxon>Dikarya</taxon>
        <taxon>Ascomycota</taxon>
        <taxon>Pezizomycotina</taxon>
        <taxon>Sordariomycetes</taxon>
        <taxon>Sordariomycetidae</taxon>
        <taxon>Sordariales</taxon>
        <taxon>Sordariaceae</taxon>
        <taxon>Neurospora</taxon>
    </lineage>
</organism>
<sequence>MAVIDQDNFSNISWHSEQNAESAASTAQVHHESNSSPEYARSGPDDGRPGDNAAGMEHDELDHSGGEILDCTVSDPHKENDGTKDAYVSYLITTNTTFPSFQKPKTTVRRRFTDFVFLYKVLCRDYQACAVPPLPDKQRMEYVRGDRFGTDFTARRAYSLQRFLARLALHPILRKADILHAFLESPDWNATMRSRSVRGSLASPGGIGDSTLGGSAAAGGGGGVFDTFADSFMNAFTKVHKPDRRFIEIKEKSDKLDEDLNHIEKVVARVARREADIESDLKDLAEQFQKLITLEPGVETAVRAFAASVEDTASGLKKLKDHTDQDYLGSLRDMVAYSGTLKNLLKAREQKQLDYEQLTEYLNKSRTDRDMLASGQSYGAGSALMSGAGGFIRSKIEDVRGVDHEQARRDRQRKLELRIEELTREVEVARNESESFAEQVSREVESFDWIKRVEFKRQFSGLADAHIEFYGDVMSVWEQYVMEMEKEGVVLPA</sequence>
<comment type="function">
    <text evidence="2">Sorting nexin, involved in the separation or division of vacuoles throughout the entire life cycle of the cells. Involved in retrieval of late-Golgi SNAREs from post-Golgi endosomes to the trans-Golgi network, for cytoplasm to vacuole transport (Cvt), and autophagy of large cargos including mitophagy, pexophagy and glycophagy.</text>
</comment>
<comment type="subcellular location">
    <subcellularLocation>
        <location evidence="1">Cytoplasm</location>
    </subcellularLocation>
    <subcellularLocation>
        <location evidence="1">Membrane</location>
        <topology evidence="1">Peripheral membrane protein</topology>
    </subcellularLocation>
    <subcellularLocation>
        <location evidence="1">Endosome membrane</location>
        <topology evidence="1">Peripheral membrane protein</topology>
    </subcellularLocation>
    <text evidence="1">Endosome and other perivacuolar punctate structures.</text>
</comment>
<comment type="domain">
    <text evidence="1">The PX domain binds phosphatidylinositol 3-phosphate which is necessary for peripheral membrane localization to the perivacuolar punctate structures.</text>
</comment>
<comment type="similarity">
    <text evidence="6">Belongs to the sorting nexin family.</text>
</comment>